<gene>
    <name evidence="1" type="primary">deoB</name>
    <name type="ordered locus">Sbal223_1142</name>
</gene>
<dbReference type="EC" id="5.4.2.7" evidence="1"/>
<dbReference type="EMBL" id="CP001252">
    <property type="protein sequence ID" value="ACK45657.1"/>
    <property type="molecule type" value="Genomic_DNA"/>
</dbReference>
<dbReference type="RefSeq" id="WP_012587041.1">
    <property type="nucleotide sequence ID" value="NC_011663.1"/>
</dbReference>
<dbReference type="SMR" id="B8E6P6"/>
<dbReference type="KEGG" id="sbp:Sbal223_1142"/>
<dbReference type="HOGENOM" id="CLU_053861_0_0_6"/>
<dbReference type="UniPathway" id="UPA00002">
    <property type="reaction ID" value="UER00467"/>
</dbReference>
<dbReference type="Proteomes" id="UP000002507">
    <property type="component" value="Chromosome"/>
</dbReference>
<dbReference type="GO" id="GO:0005829">
    <property type="term" value="C:cytosol"/>
    <property type="evidence" value="ECO:0007669"/>
    <property type="project" value="TreeGrafter"/>
</dbReference>
<dbReference type="GO" id="GO:0000287">
    <property type="term" value="F:magnesium ion binding"/>
    <property type="evidence" value="ECO:0007669"/>
    <property type="project" value="InterPro"/>
</dbReference>
<dbReference type="GO" id="GO:0030145">
    <property type="term" value="F:manganese ion binding"/>
    <property type="evidence" value="ECO:0007669"/>
    <property type="project" value="UniProtKB-UniRule"/>
</dbReference>
<dbReference type="GO" id="GO:0008973">
    <property type="term" value="F:phosphopentomutase activity"/>
    <property type="evidence" value="ECO:0007669"/>
    <property type="project" value="UniProtKB-UniRule"/>
</dbReference>
<dbReference type="GO" id="GO:0006018">
    <property type="term" value="P:2-deoxyribose 1-phosphate catabolic process"/>
    <property type="evidence" value="ECO:0007669"/>
    <property type="project" value="UniProtKB-UniRule"/>
</dbReference>
<dbReference type="GO" id="GO:0006015">
    <property type="term" value="P:5-phosphoribose 1-diphosphate biosynthetic process"/>
    <property type="evidence" value="ECO:0007669"/>
    <property type="project" value="UniProtKB-UniPathway"/>
</dbReference>
<dbReference type="GO" id="GO:0043094">
    <property type="term" value="P:metabolic compound salvage"/>
    <property type="evidence" value="ECO:0007669"/>
    <property type="project" value="InterPro"/>
</dbReference>
<dbReference type="GO" id="GO:0009117">
    <property type="term" value="P:nucleotide metabolic process"/>
    <property type="evidence" value="ECO:0007669"/>
    <property type="project" value="InterPro"/>
</dbReference>
<dbReference type="CDD" id="cd16009">
    <property type="entry name" value="PPM"/>
    <property type="match status" value="1"/>
</dbReference>
<dbReference type="FunFam" id="3.30.70.1250:FF:000001">
    <property type="entry name" value="Phosphopentomutase"/>
    <property type="match status" value="1"/>
</dbReference>
<dbReference type="Gene3D" id="3.40.720.10">
    <property type="entry name" value="Alkaline Phosphatase, subunit A"/>
    <property type="match status" value="1"/>
</dbReference>
<dbReference type="Gene3D" id="3.30.70.1250">
    <property type="entry name" value="Phosphopentomutase"/>
    <property type="match status" value="1"/>
</dbReference>
<dbReference type="HAMAP" id="MF_00740">
    <property type="entry name" value="Phosphopentomut"/>
    <property type="match status" value="1"/>
</dbReference>
<dbReference type="InterPro" id="IPR017850">
    <property type="entry name" value="Alkaline_phosphatase_core_sf"/>
</dbReference>
<dbReference type="InterPro" id="IPR010045">
    <property type="entry name" value="DeoB"/>
</dbReference>
<dbReference type="InterPro" id="IPR006124">
    <property type="entry name" value="Metalloenzyme"/>
</dbReference>
<dbReference type="InterPro" id="IPR024052">
    <property type="entry name" value="Phosphopentomutase_DeoB_cap_sf"/>
</dbReference>
<dbReference type="NCBIfam" id="TIGR01696">
    <property type="entry name" value="deoB"/>
    <property type="match status" value="1"/>
</dbReference>
<dbReference type="NCBIfam" id="NF003766">
    <property type="entry name" value="PRK05362.1"/>
    <property type="match status" value="1"/>
</dbReference>
<dbReference type="PANTHER" id="PTHR21110">
    <property type="entry name" value="PHOSPHOPENTOMUTASE"/>
    <property type="match status" value="1"/>
</dbReference>
<dbReference type="PANTHER" id="PTHR21110:SF0">
    <property type="entry name" value="PHOSPHOPENTOMUTASE"/>
    <property type="match status" value="1"/>
</dbReference>
<dbReference type="Pfam" id="PF01676">
    <property type="entry name" value="Metalloenzyme"/>
    <property type="match status" value="1"/>
</dbReference>
<dbReference type="PIRSF" id="PIRSF001491">
    <property type="entry name" value="Ppentomutase"/>
    <property type="match status" value="1"/>
</dbReference>
<dbReference type="SUPFAM" id="SSF53649">
    <property type="entry name" value="Alkaline phosphatase-like"/>
    <property type="match status" value="1"/>
</dbReference>
<dbReference type="SUPFAM" id="SSF143856">
    <property type="entry name" value="DeoB insert domain-like"/>
    <property type="match status" value="1"/>
</dbReference>
<sequence>MKRTIIMMLDSFGVGASADAASFGDVGSDTFGHIAKACAEGKADIGREGPLKLPNLARLGLGHAAMESTGAFAPGFGDNVELIGAYGHAQELSSGKDTPSGHWEMAGVPVLFEWGYFSEHQNSFPKELTDKILARAGLDGFLGNCHASGTTILEELGEEHMRSGKPIFYTSADSVFQIACHEETFGLDNLYRLCAITREELEPYNIGRVIARPFDGTGSSDFARTGNRKDYSLAPPAKTVLDKLNEAGGEVVSVGKIADIYAYCGITKKVKANGLEALFDATLAEVKSAGDNTIVFTNFVDFDSHYGHRRDVAGYAKGLEYFDARLPEMLALLGEDDLLILTADHGCDPTWQGTDHTREYVPVLAFGAGLKAGSLGRRKSFADIGQSIASHFKLEPMAYGESFL</sequence>
<proteinExistence type="inferred from homology"/>
<accession>B8E6P6</accession>
<evidence type="ECO:0000255" key="1">
    <source>
        <dbReference type="HAMAP-Rule" id="MF_00740"/>
    </source>
</evidence>
<protein>
    <recommendedName>
        <fullName evidence="1">Phosphopentomutase</fullName>
        <ecNumber evidence="1">5.4.2.7</ecNumber>
    </recommendedName>
    <alternativeName>
        <fullName evidence="1">Phosphodeoxyribomutase</fullName>
    </alternativeName>
</protein>
<feature type="chain" id="PRO_1000148250" description="Phosphopentomutase">
    <location>
        <begin position="1"/>
        <end position="404"/>
    </location>
</feature>
<feature type="binding site" evidence="1">
    <location>
        <position position="10"/>
    </location>
    <ligand>
        <name>Mn(2+)</name>
        <dbReference type="ChEBI" id="CHEBI:29035"/>
        <label>1</label>
    </ligand>
</feature>
<feature type="binding site" evidence="1">
    <location>
        <position position="303"/>
    </location>
    <ligand>
        <name>Mn(2+)</name>
        <dbReference type="ChEBI" id="CHEBI:29035"/>
        <label>2</label>
    </ligand>
</feature>
<feature type="binding site" evidence="1">
    <location>
        <position position="308"/>
    </location>
    <ligand>
        <name>Mn(2+)</name>
        <dbReference type="ChEBI" id="CHEBI:29035"/>
        <label>2</label>
    </ligand>
</feature>
<feature type="binding site" evidence="1">
    <location>
        <position position="344"/>
    </location>
    <ligand>
        <name>Mn(2+)</name>
        <dbReference type="ChEBI" id="CHEBI:29035"/>
        <label>1</label>
    </ligand>
</feature>
<feature type="binding site" evidence="1">
    <location>
        <position position="345"/>
    </location>
    <ligand>
        <name>Mn(2+)</name>
        <dbReference type="ChEBI" id="CHEBI:29035"/>
        <label>1</label>
    </ligand>
</feature>
<feature type="binding site" evidence="1">
    <location>
        <position position="356"/>
    </location>
    <ligand>
        <name>Mn(2+)</name>
        <dbReference type="ChEBI" id="CHEBI:29035"/>
        <label>2</label>
    </ligand>
</feature>
<comment type="function">
    <text evidence="1">Isomerase that catalyzes the conversion of deoxy-ribose 1-phosphate (dRib-1-P) and ribose 1-phosphate (Rib-1-P) to deoxy-ribose 5-phosphate (dRib-5-P) and ribose 5-phosphate (Rib-5-P), respectively.</text>
</comment>
<comment type="catalytic activity">
    <reaction evidence="1">
        <text>2-deoxy-alpha-D-ribose 1-phosphate = 2-deoxy-D-ribose 5-phosphate</text>
        <dbReference type="Rhea" id="RHEA:27658"/>
        <dbReference type="ChEBI" id="CHEBI:57259"/>
        <dbReference type="ChEBI" id="CHEBI:62877"/>
        <dbReference type="EC" id="5.4.2.7"/>
    </reaction>
</comment>
<comment type="catalytic activity">
    <reaction evidence="1">
        <text>alpha-D-ribose 1-phosphate = D-ribose 5-phosphate</text>
        <dbReference type="Rhea" id="RHEA:18793"/>
        <dbReference type="ChEBI" id="CHEBI:57720"/>
        <dbReference type="ChEBI" id="CHEBI:78346"/>
        <dbReference type="EC" id="5.4.2.7"/>
    </reaction>
</comment>
<comment type="cofactor">
    <cofactor evidence="1">
        <name>Mn(2+)</name>
        <dbReference type="ChEBI" id="CHEBI:29035"/>
    </cofactor>
    <text evidence="1">Binds 2 manganese ions.</text>
</comment>
<comment type="pathway">
    <text evidence="1">Carbohydrate degradation; 2-deoxy-D-ribose 1-phosphate degradation; D-glyceraldehyde 3-phosphate and acetaldehyde from 2-deoxy-alpha-D-ribose 1-phosphate: step 1/2.</text>
</comment>
<comment type="subcellular location">
    <subcellularLocation>
        <location evidence="1">Cytoplasm</location>
    </subcellularLocation>
</comment>
<comment type="similarity">
    <text evidence="1">Belongs to the phosphopentomutase family.</text>
</comment>
<name>DEOB_SHEB2</name>
<organism>
    <name type="scientific">Shewanella baltica (strain OS223)</name>
    <dbReference type="NCBI Taxonomy" id="407976"/>
    <lineage>
        <taxon>Bacteria</taxon>
        <taxon>Pseudomonadati</taxon>
        <taxon>Pseudomonadota</taxon>
        <taxon>Gammaproteobacteria</taxon>
        <taxon>Alteromonadales</taxon>
        <taxon>Shewanellaceae</taxon>
        <taxon>Shewanella</taxon>
    </lineage>
</organism>
<reference key="1">
    <citation type="submission" date="2008-12" db="EMBL/GenBank/DDBJ databases">
        <title>Complete sequence of chromosome of Shewanella baltica OS223.</title>
        <authorList>
            <consortium name="US DOE Joint Genome Institute"/>
            <person name="Lucas S."/>
            <person name="Copeland A."/>
            <person name="Lapidus A."/>
            <person name="Glavina del Rio T."/>
            <person name="Dalin E."/>
            <person name="Tice H."/>
            <person name="Bruce D."/>
            <person name="Goodwin L."/>
            <person name="Pitluck S."/>
            <person name="Chertkov O."/>
            <person name="Meincke L."/>
            <person name="Brettin T."/>
            <person name="Detter J.C."/>
            <person name="Han C."/>
            <person name="Kuske C.R."/>
            <person name="Larimer F."/>
            <person name="Land M."/>
            <person name="Hauser L."/>
            <person name="Kyrpides N."/>
            <person name="Ovchinnikova G."/>
            <person name="Brettar I."/>
            <person name="Rodrigues J."/>
            <person name="Konstantinidis K."/>
            <person name="Tiedje J."/>
        </authorList>
    </citation>
    <scope>NUCLEOTIDE SEQUENCE [LARGE SCALE GENOMIC DNA]</scope>
    <source>
        <strain>OS223</strain>
    </source>
</reference>
<keyword id="KW-0963">Cytoplasm</keyword>
<keyword id="KW-0413">Isomerase</keyword>
<keyword id="KW-0464">Manganese</keyword>
<keyword id="KW-0479">Metal-binding</keyword>